<evidence type="ECO:0000250" key="1"/>
<evidence type="ECO:0000255" key="2">
    <source>
        <dbReference type="PROSITE-ProRule" id="PRU00434"/>
    </source>
</evidence>
<evidence type="ECO:0000305" key="3"/>
<gene>
    <name type="ordered locus">spyM18_0273</name>
</gene>
<organism>
    <name type="scientific">Streptococcus pyogenes serotype M18 (strain MGAS8232)</name>
    <dbReference type="NCBI Taxonomy" id="186103"/>
    <lineage>
        <taxon>Bacteria</taxon>
        <taxon>Bacillati</taxon>
        <taxon>Bacillota</taxon>
        <taxon>Bacilli</taxon>
        <taxon>Lactobacillales</taxon>
        <taxon>Streptococcaceae</taxon>
        <taxon>Streptococcus</taxon>
    </lineage>
</organism>
<accession>Q8P2M5</accession>
<feature type="chain" id="PRO_0000093215" description="Probable ABC transporter ATP-binding protein spyM18_0273">
    <location>
        <begin position="1"/>
        <end position="256"/>
    </location>
</feature>
<feature type="domain" description="ABC transporter" evidence="2">
    <location>
        <begin position="4"/>
        <end position="246"/>
    </location>
</feature>
<feature type="binding site" evidence="2">
    <location>
        <begin position="36"/>
        <end position="43"/>
    </location>
    <ligand>
        <name>ATP</name>
        <dbReference type="ChEBI" id="CHEBI:30616"/>
    </ligand>
</feature>
<name>Y273_STRP8</name>
<reference key="1">
    <citation type="journal article" date="2002" name="Proc. Natl. Acad. Sci. U.S.A.">
        <title>Genome sequence and comparative microarray analysis of serotype M18 group A Streptococcus strains associated with acute rheumatic fever outbreaks.</title>
        <authorList>
            <person name="Smoot J.C."/>
            <person name="Barbian K.D."/>
            <person name="Van Gompel J.J."/>
            <person name="Smoot L.M."/>
            <person name="Chaussee M.S."/>
            <person name="Sylva G.L."/>
            <person name="Sturdevant D.E."/>
            <person name="Ricklefs S.M."/>
            <person name="Porcella S.F."/>
            <person name="Parkins L.D."/>
            <person name="Beres S.B."/>
            <person name="Campbell D.S."/>
            <person name="Smith T.M."/>
            <person name="Zhang Q."/>
            <person name="Kapur V."/>
            <person name="Daly J.A."/>
            <person name="Veasy L.G."/>
            <person name="Musser J.M."/>
        </authorList>
    </citation>
    <scope>NUCLEOTIDE SEQUENCE [LARGE SCALE GENOMIC DNA]</scope>
    <source>
        <strain>MGAS8232</strain>
    </source>
</reference>
<comment type="subcellular location">
    <subcellularLocation>
        <location evidence="1">Cell membrane</location>
        <topology evidence="1">Peripheral membrane protein</topology>
    </subcellularLocation>
</comment>
<comment type="similarity">
    <text evidence="3">Belongs to the ABC transporter superfamily. Ycf16 family.</text>
</comment>
<proteinExistence type="inferred from homology"/>
<dbReference type="EMBL" id="AE009949">
    <property type="protein sequence ID" value="AAL97049.1"/>
    <property type="molecule type" value="Genomic_DNA"/>
</dbReference>
<dbReference type="SMR" id="Q8P2M5"/>
<dbReference type="KEGG" id="spm:spyM18_0273"/>
<dbReference type="HOGENOM" id="CLU_000604_48_1_9"/>
<dbReference type="GO" id="GO:0005886">
    <property type="term" value="C:plasma membrane"/>
    <property type="evidence" value="ECO:0007669"/>
    <property type="project" value="UniProtKB-SubCell"/>
</dbReference>
<dbReference type="GO" id="GO:0005524">
    <property type="term" value="F:ATP binding"/>
    <property type="evidence" value="ECO:0007669"/>
    <property type="project" value="UniProtKB-KW"/>
</dbReference>
<dbReference type="GO" id="GO:0016887">
    <property type="term" value="F:ATP hydrolysis activity"/>
    <property type="evidence" value="ECO:0007669"/>
    <property type="project" value="InterPro"/>
</dbReference>
<dbReference type="CDD" id="cd03217">
    <property type="entry name" value="ABC_FeS_Assembly"/>
    <property type="match status" value="1"/>
</dbReference>
<dbReference type="Gene3D" id="3.40.50.300">
    <property type="entry name" value="P-loop containing nucleotide triphosphate hydrolases"/>
    <property type="match status" value="1"/>
</dbReference>
<dbReference type="InterPro" id="IPR003593">
    <property type="entry name" value="AAA+_ATPase"/>
</dbReference>
<dbReference type="InterPro" id="IPR003439">
    <property type="entry name" value="ABC_transporter-like_ATP-bd"/>
</dbReference>
<dbReference type="InterPro" id="IPR017871">
    <property type="entry name" value="ABC_transporter-like_CS"/>
</dbReference>
<dbReference type="InterPro" id="IPR010230">
    <property type="entry name" value="FeS-cluster_ATPase_SufC"/>
</dbReference>
<dbReference type="InterPro" id="IPR027417">
    <property type="entry name" value="P-loop_NTPase"/>
</dbReference>
<dbReference type="NCBIfam" id="TIGR01978">
    <property type="entry name" value="sufC"/>
    <property type="match status" value="1"/>
</dbReference>
<dbReference type="PANTHER" id="PTHR43204">
    <property type="entry name" value="ABC TRANSPORTER I FAMILY MEMBER 6, CHLOROPLASTIC"/>
    <property type="match status" value="1"/>
</dbReference>
<dbReference type="PANTHER" id="PTHR43204:SF1">
    <property type="entry name" value="ABC TRANSPORTER I FAMILY MEMBER 6, CHLOROPLASTIC"/>
    <property type="match status" value="1"/>
</dbReference>
<dbReference type="Pfam" id="PF00005">
    <property type="entry name" value="ABC_tran"/>
    <property type="match status" value="1"/>
</dbReference>
<dbReference type="SMART" id="SM00382">
    <property type="entry name" value="AAA"/>
    <property type="match status" value="1"/>
</dbReference>
<dbReference type="SUPFAM" id="SSF52540">
    <property type="entry name" value="P-loop containing nucleoside triphosphate hydrolases"/>
    <property type="match status" value="1"/>
</dbReference>
<dbReference type="PROSITE" id="PS00211">
    <property type="entry name" value="ABC_TRANSPORTER_1"/>
    <property type="match status" value="1"/>
</dbReference>
<dbReference type="PROSITE" id="PS50893">
    <property type="entry name" value="ABC_TRANSPORTER_2"/>
    <property type="match status" value="1"/>
</dbReference>
<keyword id="KW-0067">ATP-binding</keyword>
<keyword id="KW-1003">Cell membrane</keyword>
<keyword id="KW-0472">Membrane</keyword>
<keyword id="KW-0547">Nucleotide-binding</keyword>
<keyword id="KW-0813">Transport</keyword>
<protein>
    <recommendedName>
        <fullName>Probable ABC transporter ATP-binding protein spyM18_0273</fullName>
    </recommendedName>
</protein>
<sequence length="256" mass="28168">MSILEINNLHVSIEGKEILKGVNLTLKTGEVAAIMGPNGTGKSTLSAAIMGNPNYEVTQGQILLDGVNILDLEVDERARLGLFLAMQYPSEIPGITNAEFMRAAMNADKADEDKISVRDFITKLDEKMALLGMKEEMAERYLNEGFSGGEKKRNEILQLLMLEPKFALLDEIDSGLDIDALKVVSKGVNEMRGKDFGAMIITHYQRLLNYITPDLVHVMMDGRIVLSGDAALATRLEKEGYAGIAQDLGIEYKEES</sequence>